<sequence length="187" mass="20667">MNLQHHFLIAMPSLQDPQFKRSVIYICEHDEKGAMGLVINKPLEQLTVETILEKLKIKSPSRDPAIRLDNVVLAGGPLAEDRGFILHSPQEGFASSIHISPETMITTSKDVLETLGTSGQPKNLLVALGYASWRQGQLEQELLDNVWLTTEADTHILFNTPIAERWQAAANKLGINIFNIAPQAGHA</sequence>
<proteinExistence type="inferred from homology"/>
<protein>
    <recommendedName>
        <fullName evidence="1">UPF0301 protein YPK_0837</fullName>
    </recommendedName>
</protein>
<accession>B1JNP6</accession>
<evidence type="ECO:0000255" key="1">
    <source>
        <dbReference type="HAMAP-Rule" id="MF_00758"/>
    </source>
</evidence>
<feature type="chain" id="PRO_1000198312" description="UPF0301 protein YPK_0837">
    <location>
        <begin position="1"/>
        <end position="187"/>
    </location>
</feature>
<reference key="1">
    <citation type="submission" date="2008-02" db="EMBL/GenBank/DDBJ databases">
        <title>Complete sequence of Yersinia pseudotuberculosis YPIII.</title>
        <authorList>
            <consortium name="US DOE Joint Genome Institute"/>
            <person name="Copeland A."/>
            <person name="Lucas S."/>
            <person name="Lapidus A."/>
            <person name="Glavina del Rio T."/>
            <person name="Dalin E."/>
            <person name="Tice H."/>
            <person name="Bruce D."/>
            <person name="Goodwin L."/>
            <person name="Pitluck S."/>
            <person name="Munk A.C."/>
            <person name="Brettin T."/>
            <person name="Detter J.C."/>
            <person name="Han C."/>
            <person name="Tapia R."/>
            <person name="Schmutz J."/>
            <person name="Larimer F."/>
            <person name="Land M."/>
            <person name="Hauser L."/>
            <person name="Challacombe J.F."/>
            <person name="Green L."/>
            <person name="Lindler L.E."/>
            <person name="Nikolich M.P."/>
            <person name="Richardson P."/>
        </authorList>
    </citation>
    <scope>NUCLEOTIDE SEQUENCE [LARGE SCALE GENOMIC DNA]</scope>
    <source>
        <strain>YPIII</strain>
    </source>
</reference>
<comment type="similarity">
    <text evidence="1">Belongs to the UPF0301 (AlgH) family.</text>
</comment>
<gene>
    <name type="ordered locus">YPK_0837</name>
</gene>
<organism>
    <name type="scientific">Yersinia pseudotuberculosis serotype O:3 (strain YPIII)</name>
    <dbReference type="NCBI Taxonomy" id="502800"/>
    <lineage>
        <taxon>Bacteria</taxon>
        <taxon>Pseudomonadati</taxon>
        <taxon>Pseudomonadota</taxon>
        <taxon>Gammaproteobacteria</taxon>
        <taxon>Enterobacterales</taxon>
        <taxon>Yersiniaceae</taxon>
        <taxon>Yersinia</taxon>
    </lineage>
</organism>
<name>Y837_YERPY</name>
<dbReference type="EMBL" id="CP000950">
    <property type="protein sequence ID" value="ACA67138.1"/>
    <property type="molecule type" value="Genomic_DNA"/>
</dbReference>
<dbReference type="RefSeq" id="WP_011192971.1">
    <property type="nucleotide sequence ID" value="NZ_CP009792.1"/>
</dbReference>
<dbReference type="SMR" id="B1JNP6"/>
<dbReference type="KEGG" id="ypy:YPK_0837"/>
<dbReference type="PATRIC" id="fig|502800.11.peg.1462"/>
<dbReference type="GO" id="GO:0005829">
    <property type="term" value="C:cytosol"/>
    <property type="evidence" value="ECO:0007669"/>
    <property type="project" value="TreeGrafter"/>
</dbReference>
<dbReference type="Gene3D" id="3.40.1740.10">
    <property type="entry name" value="VC0467-like"/>
    <property type="match status" value="1"/>
</dbReference>
<dbReference type="Gene3D" id="3.30.70.1300">
    <property type="entry name" value="VC0467-like domains"/>
    <property type="match status" value="1"/>
</dbReference>
<dbReference type="HAMAP" id="MF_00758">
    <property type="entry name" value="UPF0301"/>
    <property type="match status" value="1"/>
</dbReference>
<dbReference type="InterPro" id="IPR003774">
    <property type="entry name" value="AlgH-like"/>
</dbReference>
<dbReference type="NCBIfam" id="NF001266">
    <property type="entry name" value="PRK00228.1-1"/>
    <property type="match status" value="1"/>
</dbReference>
<dbReference type="PANTHER" id="PTHR30327">
    <property type="entry name" value="UNCHARACTERIZED PROTEIN YQGE"/>
    <property type="match status" value="1"/>
</dbReference>
<dbReference type="PANTHER" id="PTHR30327:SF1">
    <property type="entry name" value="UPF0301 PROTEIN YQGE"/>
    <property type="match status" value="1"/>
</dbReference>
<dbReference type="Pfam" id="PF02622">
    <property type="entry name" value="DUF179"/>
    <property type="match status" value="1"/>
</dbReference>
<dbReference type="SUPFAM" id="SSF143456">
    <property type="entry name" value="VC0467-like"/>
    <property type="match status" value="1"/>
</dbReference>